<organism>
    <name type="scientific">Pongo abelii</name>
    <name type="common">Sumatran orangutan</name>
    <name type="synonym">Pongo pygmaeus abelii</name>
    <dbReference type="NCBI Taxonomy" id="9601"/>
    <lineage>
        <taxon>Eukaryota</taxon>
        <taxon>Metazoa</taxon>
        <taxon>Chordata</taxon>
        <taxon>Craniata</taxon>
        <taxon>Vertebrata</taxon>
        <taxon>Euteleostomi</taxon>
        <taxon>Mammalia</taxon>
        <taxon>Eutheria</taxon>
        <taxon>Euarchontoglires</taxon>
        <taxon>Primates</taxon>
        <taxon>Haplorrhini</taxon>
        <taxon>Catarrhini</taxon>
        <taxon>Hominidae</taxon>
        <taxon>Pongo</taxon>
    </lineage>
</organism>
<reference key="1">
    <citation type="submission" date="2004-11" db="EMBL/GenBank/DDBJ databases">
        <authorList>
            <consortium name="The German cDNA consortium"/>
        </authorList>
    </citation>
    <scope>NUCLEOTIDE SEQUENCE [LARGE SCALE MRNA]</scope>
    <source>
        <tissue>Brain cortex</tissue>
    </source>
</reference>
<feature type="chain" id="PRO_0000310540" description="Cell cycle progression protein 1">
    <location>
        <begin position="1"/>
        <end position="806"/>
    </location>
</feature>
<feature type="topological domain" description="Cytoplasmic" evidence="3">
    <location>
        <begin position="1"/>
        <end position="216"/>
    </location>
</feature>
<feature type="transmembrane region" description="Helical; Signal-anchor for type II membrane protein" evidence="3">
    <location>
        <begin position="217"/>
        <end position="237"/>
    </location>
</feature>
<feature type="topological domain" description="Lumenal" evidence="3">
    <location>
        <begin position="238"/>
        <end position="806"/>
    </location>
</feature>
<feature type="region of interest" description="Interaction with MCF2L and SRC" evidence="1">
    <location>
        <begin position="1"/>
        <end position="307"/>
    </location>
</feature>
<feature type="region of interest" description="Disordered" evidence="4">
    <location>
        <begin position="80"/>
        <end position="105"/>
    </location>
</feature>
<feature type="region of interest" description="Disordered" evidence="4">
    <location>
        <begin position="152"/>
        <end position="207"/>
    </location>
</feature>
<feature type="region of interest" description="Disordered" evidence="4">
    <location>
        <begin position="457"/>
        <end position="478"/>
    </location>
</feature>
<feature type="region of interest" description="Disordered" evidence="4">
    <location>
        <begin position="758"/>
        <end position="778"/>
    </location>
</feature>
<feature type="coiled-coil region" evidence="3">
    <location>
        <begin position="305"/>
        <end position="449"/>
    </location>
</feature>
<feature type="coiled-coil region" evidence="3">
    <location>
        <begin position="503"/>
        <end position="529"/>
    </location>
</feature>
<feature type="compositionally biased region" description="Basic residues" evidence="4">
    <location>
        <begin position="175"/>
        <end position="184"/>
    </location>
</feature>
<feature type="compositionally biased region" description="Basic and acidic residues" evidence="4">
    <location>
        <begin position="190"/>
        <end position="207"/>
    </location>
</feature>
<feature type="compositionally biased region" description="Basic and acidic residues" evidence="4">
    <location>
        <begin position="457"/>
        <end position="467"/>
    </location>
</feature>
<feature type="compositionally biased region" description="Basic residues" evidence="4">
    <location>
        <begin position="468"/>
        <end position="478"/>
    </location>
</feature>
<feature type="modified residue" description="Phosphoserine" evidence="2">
    <location>
        <position position="186"/>
    </location>
</feature>
<proteinExistence type="evidence at transcript level"/>
<gene>
    <name type="primary">CCPG1</name>
</gene>
<keyword id="KW-0131">Cell cycle</keyword>
<keyword id="KW-0175">Coiled coil</keyword>
<keyword id="KW-0472">Membrane</keyword>
<keyword id="KW-0597">Phosphoprotein</keyword>
<keyword id="KW-1185">Reference proteome</keyword>
<keyword id="KW-0735">Signal-anchor</keyword>
<keyword id="KW-0812">Transmembrane</keyword>
<keyword id="KW-1133">Transmembrane helix</keyword>
<name>CCPG1_PONAB</name>
<protein>
    <recommendedName>
        <fullName>Cell cycle progression protein 1</fullName>
    </recommendedName>
</protein>
<dbReference type="EMBL" id="CR860422">
    <property type="protein sequence ID" value="CAH92547.1"/>
    <property type="molecule type" value="mRNA"/>
</dbReference>
<dbReference type="SMR" id="Q5R6R3"/>
<dbReference type="FunCoup" id="Q5R6R3">
    <property type="interactions" value="845"/>
</dbReference>
<dbReference type="STRING" id="9601.ENSPPYP00000007368"/>
<dbReference type="eggNOG" id="ENOG502QWDZ">
    <property type="taxonomic scope" value="Eukaryota"/>
</dbReference>
<dbReference type="InParanoid" id="Q5R6R3"/>
<dbReference type="Proteomes" id="UP000001595">
    <property type="component" value="Unplaced"/>
</dbReference>
<dbReference type="GO" id="GO:0016020">
    <property type="term" value="C:membrane"/>
    <property type="evidence" value="ECO:0007669"/>
    <property type="project" value="UniProtKB-KW"/>
</dbReference>
<dbReference type="Gene3D" id="1.20.120.20">
    <property type="entry name" value="Apolipoprotein"/>
    <property type="match status" value="1"/>
</dbReference>
<dbReference type="InterPro" id="IPR051990">
    <property type="entry name" value="CCPG1/PBIP1"/>
</dbReference>
<dbReference type="PANTHER" id="PTHR28638">
    <property type="entry name" value="CELL CYCLE PROGRESSION PROTEIN 1"/>
    <property type="match status" value="1"/>
</dbReference>
<dbReference type="PANTHER" id="PTHR28638:SF2">
    <property type="entry name" value="CELL CYCLE PROGRESSION PROTEIN 1"/>
    <property type="match status" value="1"/>
</dbReference>
<evidence type="ECO:0000250" key="1"/>
<evidence type="ECO:0000250" key="2">
    <source>
        <dbReference type="UniProtKB" id="Q9ULG6"/>
    </source>
</evidence>
<evidence type="ECO:0000255" key="3"/>
<evidence type="ECO:0000256" key="4">
    <source>
        <dbReference type="SAM" id="MobiDB-lite"/>
    </source>
</evidence>
<evidence type="ECO:0000305" key="5"/>
<sequence length="806" mass="93471">MSENSSDSDSSCGWTVISHEGSDIEMLNSVTPTNSCEPAPECSSLEQEELQALQLEQGESSQNGTVLMEETAYPALEETSSTIEAEEEKIPEDNIYIGTASDDSDIVTLEPPKLEEIGNQEVVIVEEAQSSEDFNMGSSSSSQYTFCQPETVFSSQPSDDESSSDETSNQPSPAFRRRRARKKTVSTSESEDRLVAEQETEPSKESKRQFSSGLNKCVILALVIAVSMGFGHFYGTIQIQKRQQLVRKIHEDELNDMKDYLSQCQQEQGSFIDYKSLKENLARCWTLTEAEKMSFETQKTNLATENQYLRVSLEKEEKALSSLQEELNKLREQIRILEDKGTSTELVKENQKLKQHLEEEKQKKHSFLSQRETLLTEAKMLKRELERERLVTTALRGELQQLSGSQLHGKSDSPNVYTEKKEIAILRERLTELERKLTFEQQRSDLWERLYVEAKDQSGKQETDGKKKVGRGNHRAKNKSKETFLGSVKETFDAMKNSTKEFVRHHKEKIKQAKEAVKENLKKFSDSVKSTFRHFKDTTKNIFDEKGNKRFGATKAAAEKPRTVFSDYLHPQYKAPTENHHNRGPTMQNDGRKEKPVHFKEFRKNTNSRKCSPGHACRENSHSFRKACYGVFDCAQQESISLFNTVVNPIRMDEFRQIIQRYMLKELDTFCHWNELDRFINKFFLNGVFIHDQKLFTDFVNDVKDYLRNMKEYQVDNDGVFEKLDEYIYRHFFGHTFSPPYGPSRPDKKQRMVNIENSRHRKQEQKHLQPQPYKREGKWHKYGRTNGRQMANLEIELGQLPFDPQY</sequence>
<accession>Q5R6R3</accession>
<comment type="function">
    <text evidence="1">Acts as an assembly platform for Rho protein signaling complexes. Limits guanine nucleotide exchange activity of MCF2L toward RHOA, which results in an inhibition of both its transcriptional activation ability and its transforming activity. Does not inhibit activity of MCF2L toward CDC42, or activity of MCF2 toward either RHOA or CDC42. May be involved in cell cycle regulation (By similarity).</text>
</comment>
<comment type="subunit">
    <text evidence="1">Interacts with MCF2L. May interact with MCF2, ARHGEF1, BCR, VAV1 and FGD1, but not with TIAM1. Interacts with GTP-bound CDC42 and SRC (By similarity).</text>
</comment>
<comment type="subcellular location">
    <subcellularLocation>
        <location evidence="1">Cytoplasmic granule membrane</location>
        <topology evidence="1">Single-pass type II membrane protein</topology>
    </subcellularLocation>
</comment>
<comment type="similarity">
    <text evidence="5">Belongs to the CCPG1 family.</text>
</comment>